<sequence>MKTPHKKATARQQTREIVDDHTLSASMRKKKISQKKQRGRPSSQTRRNIVGCRISHGWKEGDEPITQWKGTVLDQVPINPSLYLVKYDGIDCVYGLELHRDKRILKLKILPDKVPFSRVRDVHLANTIIGKAVEHMFEGEHGSKDGWRGMVLAQAPIMKAWFYITYEKDPVLYMYQLLDDYKEGDLHIMPESSKSSPKEREPEGVIDGLIGKHVEYTKEDGSKRTGKVIHQVKAKPSVYFIKFDDDFHIYVYDLVKKS</sequence>
<proteinExistence type="evidence at transcript level"/>
<accession>Q2KI39</accession>
<evidence type="ECO:0000250" key="1">
    <source>
        <dbReference type="UniProtKB" id="Q99865"/>
    </source>
</evidence>
<evidence type="ECO:0000250" key="2">
    <source>
        <dbReference type="UniProtKB" id="Q9BPZ2"/>
    </source>
</evidence>
<evidence type="ECO:0000250" key="3">
    <source>
        <dbReference type="UniProtKB" id="Q9Y657"/>
    </source>
</evidence>
<evidence type="ECO:0000255" key="4"/>
<evidence type="ECO:0000256" key="5">
    <source>
        <dbReference type="SAM" id="MobiDB-lite"/>
    </source>
</evidence>
<evidence type="ECO:0000305" key="6"/>
<name>SPIN2_BOVIN</name>
<feature type="chain" id="PRO_0000259589" description="Spindlin-2">
    <location>
        <begin position="1"/>
        <end position="258"/>
    </location>
</feature>
<feature type="region of interest" description="Disordered" evidence="5">
    <location>
        <begin position="1"/>
        <end position="47"/>
    </location>
</feature>
<feature type="region of interest" description="Tudor-like domain 1" evidence="4">
    <location>
        <begin position="50"/>
        <end position="99"/>
    </location>
</feature>
<feature type="region of interest" description="Tudor-like domain 2" evidence="4">
    <location>
        <begin position="129"/>
        <end position="178"/>
    </location>
</feature>
<feature type="region of interest" description="Histone H3K4me3 and H3R8me2a binding" evidence="3">
    <location>
        <position position="138"/>
    </location>
</feature>
<feature type="region of interest" description="Tudor-like domain 3" evidence="4">
    <location>
        <begin position="210"/>
        <end position="255"/>
    </location>
</feature>
<feature type="region of interest" description="Histone H3K4me3 and H3R8me2a binding" evidence="3">
    <location>
        <begin position="246"/>
        <end position="248"/>
    </location>
</feature>
<feature type="compositionally biased region" description="Basic and acidic residues" evidence="5">
    <location>
        <begin position="13"/>
        <end position="22"/>
    </location>
</feature>
<feature type="compositionally biased region" description="Basic residues" evidence="5">
    <location>
        <begin position="27"/>
        <end position="39"/>
    </location>
</feature>
<feature type="site" description="Histone H3K4me3 and H3R8me2a binding" evidence="3">
    <location>
        <position position="169"/>
    </location>
</feature>
<feature type="site" description="Histone H3K4me3 and H3R8me2a binding" evidence="3">
    <location>
        <position position="176"/>
    </location>
</feature>
<feature type="site" description="Histone H3K4me3 and H3R8me2a binding" evidence="3">
    <location>
        <position position="180"/>
    </location>
</feature>
<dbReference type="EMBL" id="BC112780">
    <property type="protein sequence ID" value="AAI12781.1"/>
    <property type="molecule type" value="mRNA"/>
</dbReference>
<dbReference type="RefSeq" id="NP_001073238.1">
    <property type="nucleotide sequence ID" value="NM_001079770.2"/>
</dbReference>
<dbReference type="RefSeq" id="XP_005228298.1">
    <property type="nucleotide sequence ID" value="XM_005228241.5"/>
</dbReference>
<dbReference type="RefSeq" id="XP_024843588.1">
    <property type="nucleotide sequence ID" value="XM_024987820.2"/>
</dbReference>
<dbReference type="SMR" id="Q2KI39"/>
<dbReference type="FunCoup" id="Q2KI39">
    <property type="interactions" value="39"/>
</dbReference>
<dbReference type="STRING" id="9913.ENSBTAP00000017636"/>
<dbReference type="PaxDb" id="9913-ENSBTAP00000017636"/>
<dbReference type="Ensembl" id="ENSBTAT00000118952.1">
    <property type="protein sequence ID" value="ENSBTAP00000082926.1"/>
    <property type="gene ID" value="ENSBTAG00000013260.6"/>
</dbReference>
<dbReference type="Ensembl" id="ENSBTAT00000120730.1">
    <property type="protein sequence ID" value="ENSBTAP00000089244.1"/>
    <property type="gene ID" value="ENSBTAG00000013260.6"/>
</dbReference>
<dbReference type="GeneID" id="506451"/>
<dbReference type="KEGG" id="bta:506451"/>
<dbReference type="CTD" id="506451"/>
<dbReference type="VEuPathDB" id="HostDB:ENSBTAG00000013260"/>
<dbReference type="eggNOG" id="ENOG502QRYD">
    <property type="taxonomic scope" value="Eukaryota"/>
</dbReference>
<dbReference type="GeneTree" id="ENSGT00950000182925"/>
<dbReference type="HOGENOM" id="CLU_068595_0_0_1"/>
<dbReference type="InParanoid" id="Q2KI39"/>
<dbReference type="OMA" id="NCQKKQR"/>
<dbReference type="OrthoDB" id="9944558at2759"/>
<dbReference type="TreeFam" id="TF332665"/>
<dbReference type="Proteomes" id="UP000009136">
    <property type="component" value="Chromosome X"/>
</dbReference>
<dbReference type="Bgee" id="ENSBTAG00000013260">
    <property type="expression patterns" value="Expressed in adenohypophysis and 99 other cell types or tissues"/>
</dbReference>
<dbReference type="GO" id="GO:0005829">
    <property type="term" value="C:cytosol"/>
    <property type="evidence" value="ECO:0000318"/>
    <property type="project" value="GO_Central"/>
</dbReference>
<dbReference type="GO" id="GO:0005654">
    <property type="term" value="C:nucleoplasm"/>
    <property type="evidence" value="ECO:0000318"/>
    <property type="project" value="GO_Central"/>
</dbReference>
<dbReference type="GO" id="GO:0140002">
    <property type="term" value="F:histone H3K4me3 reader activity"/>
    <property type="evidence" value="ECO:0000250"/>
    <property type="project" value="UniProtKB"/>
</dbReference>
<dbReference type="GO" id="GO:0035064">
    <property type="term" value="F:methylated histone binding"/>
    <property type="evidence" value="ECO:0000318"/>
    <property type="project" value="GO_Central"/>
</dbReference>
<dbReference type="GO" id="GO:0007276">
    <property type="term" value="P:gamete generation"/>
    <property type="evidence" value="ECO:0007669"/>
    <property type="project" value="InterPro"/>
</dbReference>
<dbReference type="GO" id="GO:0006355">
    <property type="term" value="P:regulation of DNA-templated transcription"/>
    <property type="evidence" value="ECO:0000318"/>
    <property type="project" value="GO_Central"/>
</dbReference>
<dbReference type="FunFam" id="2.80.10.70:FF:000001">
    <property type="entry name" value="Spindlin 1"/>
    <property type="match status" value="1"/>
</dbReference>
<dbReference type="Gene3D" id="2.80.10.70">
    <property type="entry name" value="Spindlin/Ssty"/>
    <property type="match status" value="1"/>
</dbReference>
<dbReference type="InterPro" id="IPR003671">
    <property type="entry name" value="SPIN/Ssty"/>
</dbReference>
<dbReference type="InterPro" id="IPR042567">
    <property type="entry name" value="SPIN/Ssty_sf"/>
</dbReference>
<dbReference type="PANTHER" id="PTHR10405">
    <property type="entry name" value="SPINDLIN"/>
    <property type="match status" value="1"/>
</dbReference>
<dbReference type="Pfam" id="PF02513">
    <property type="entry name" value="Spin-Ssty"/>
    <property type="match status" value="3"/>
</dbReference>
<gene>
    <name type="primary">SPIN2</name>
</gene>
<organism>
    <name type="scientific">Bos taurus</name>
    <name type="common">Bovine</name>
    <dbReference type="NCBI Taxonomy" id="9913"/>
    <lineage>
        <taxon>Eukaryota</taxon>
        <taxon>Metazoa</taxon>
        <taxon>Chordata</taxon>
        <taxon>Craniata</taxon>
        <taxon>Vertebrata</taxon>
        <taxon>Euteleostomi</taxon>
        <taxon>Mammalia</taxon>
        <taxon>Eutheria</taxon>
        <taxon>Laurasiatheria</taxon>
        <taxon>Artiodactyla</taxon>
        <taxon>Ruminantia</taxon>
        <taxon>Pecora</taxon>
        <taxon>Bovidae</taxon>
        <taxon>Bovinae</taxon>
        <taxon>Bos</taxon>
    </lineage>
</organism>
<protein>
    <recommendedName>
        <fullName>Spindlin-2</fullName>
    </recommendedName>
    <alternativeName>
        <fullName>Spindlin-like protein 2</fullName>
        <shortName>SPIN-2</shortName>
    </alternativeName>
</protein>
<keyword id="KW-0131">Cell cycle</keyword>
<keyword id="KW-0539">Nucleus</keyword>
<keyword id="KW-1185">Reference proteome</keyword>
<reference key="1">
    <citation type="submission" date="2006-01" db="EMBL/GenBank/DDBJ databases">
        <authorList>
            <consortium name="NIH - Mammalian Gene Collection (MGC) project"/>
        </authorList>
    </citation>
    <scope>NUCLEOTIDE SEQUENCE [LARGE SCALE MRNA]</scope>
    <source>
        <strain>Hereford</strain>
        <tissue>Hypothalamus</tissue>
    </source>
</reference>
<comment type="function">
    <text evidence="1">May be involved in the regulation of cell cycle progression. Exhibits H3K4me3-binding activity.</text>
</comment>
<comment type="subunit">
    <text evidence="1">Interacts with C11orf84/SPINDOC.</text>
</comment>
<comment type="subcellular location">
    <subcellularLocation>
        <location evidence="2">Nucleus</location>
    </subcellularLocation>
</comment>
<comment type="similarity">
    <text evidence="6">Belongs to the SPIN/STSY family.</text>
</comment>